<dbReference type="EC" id="4.6.1.17" evidence="1"/>
<dbReference type="EMBL" id="AE008384">
    <property type="protein sequence ID" value="AAM31902.1"/>
    <property type="molecule type" value="Genomic_DNA"/>
</dbReference>
<dbReference type="RefSeq" id="WP_011034137.1">
    <property type="nucleotide sequence ID" value="NC_003901.1"/>
</dbReference>
<dbReference type="SMR" id="Q8PUX2"/>
<dbReference type="GeneID" id="82161268"/>
<dbReference type="KEGG" id="mma:MM_2206"/>
<dbReference type="PATRIC" id="fig|192952.21.peg.2528"/>
<dbReference type="eggNOG" id="arCOG01530">
    <property type="taxonomic scope" value="Archaea"/>
</dbReference>
<dbReference type="HOGENOM" id="CLU_074693_1_2_2"/>
<dbReference type="UniPathway" id="UPA00344"/>
<dbReference type="Proteomes" id="UP000000595">
    <property type="component" value="Chromosome"/>
</dbReference>
<dbReference type="GO" id="GO:0061799">
    <property type="term" value="F:cyclic pyranopterin monophosphate synthase activity"/>
    <property type="evidence" value="ECO:0007669"/>
    <property type="project" value="UniProtKB-UniRule"/>
</dbReference>
<dbReference type="GO" id="GO:0006777">
    <property type="term" value="P:Mo-molybdopterin cofactor biosynthetic process"/>
    <property type="evidence" value="ECO:0007669"/>
    <property type="project" value="UniProtKB-UniRule"/>
</dbReference>
<dbReference type="CDD" id="cd01419">
    <property type="entry name" value="MoaC_A"/>
    <property type="match status" value="1"/>
</dbReference>
<dbReference type="Gene3D" id="3.30.70.640">
    <property type="entry name" value="Molybdopterin cofactor biosynthesis C (MoaC) domain"/>
    <property type="match status" value="1"/>
</dbReference>
<dbReference type="HAMAP" id="MF_01224_A">
    <property type="entry name" value="MoaC_A"/>
    <property type="match status" value="1"/>
</dbReference>
<dbReference type="InterPro" id="IPR023047">
    <property type="entry name" value="Mo_CF_biosynth-C_arc"/>
</dbReference>
<dbReference type="InterPro" id="IPR023045">
    <property type="entry name" value="MoaC"/>
</dbReference>
<dbReference type="InterPro" id="IPR036522">
    <property type="entry name" value="MoaC_sf"/>
</dbReference>
<dbReference type="InterPro" id="IPR050105">
    <property type="entry name" value="MoCo_biosynth_MoaA/MoaC"/>
</dbReference>
<dbReference type="InterPro" id="IPR002820">
    <property type="entry name" value="Mopterin_CF_biosynth-C_dom"/>
</dbReference>
<dbReference type="NCBIfam" id="TIGR00581">
    <property type="entry name" value="moaC"/>
    <property type="match status" value="1"/>
</dbReference>
<dbReference type="NCBIfam" id="NF006870">
    <property type="entry name" value="PRK09364.1"/>
    <property type="match status" value="1"/>
</dbReference>
<dbReference type="NCBIfam" id="NF008999">
    <property type="entry name" value="PRK12343.1"/>
    <property type="match status" value="1"/>
</dbReference>
<dbReference type="PANTHER" id="PTHR22960:SF29">
    <property type="entry name" value="CYCLIC PYRANOPTERIN MONOPHOSPHATE SYNTHASE"/>
    <property type="match status" value="1"/>
</dbReference>
<dbReference type="PANTHER" id="PTHR22960">
    <property type="entry name" value="MOLYBDOPTERIN COFACTOR SYNTHESIS PROTEIN A"/>
    <property type="match status" value="1"/>
</dbReference>
<dbReference type="Pfam" id="PF01967">
    <property type="entry name" value="MoaC"/>
    <property type="match status" value="1"/>
</dbReference>
<dbReference type="SUPFAM" id="SSF55040">
    <property type="entry name" value="Molybdenum cofactor biosynthesis protein C, MoaC"/>
    <property type="match status" value="1"/>
</dbReference>
<evidence type="ECO:0000255" key="1">
    <source>
        <dbReference type="HAMAP-Rule" id="MF_01224"/>
    </source>
</evidence>
<accession>Q8PUX2</accession>
<gene>
    <name evidence="1" type="primary">moaC</name>
    <name type="ordered locus">MM_2206</name>
</gene>
<keyword id="KW-0456">Lyase</keyword>
<keyword id="KW-0501">Molybdenum cofactor biosynthesis</keyword>
<organism>
    <name type="scientific">Methanosarcina mazei (strain ATCC BAA-159 / DSM 3647 / Goe1 / Go1 / JCM 11833 / OCM 88)</name>
    <name type="common">Methanosarcina frisia</name>
    <dbReference type="NCBI Taxonomy" id="192952"/>
    <lineage>
        <taxon>Archaea</taxon>
        <taxon>Methanobacteriati</taxon>
        <taxon>Methanobacteriota</taxon>
        <taxon>Stenosarchaea group</taxon>
        <taxon>Methanomicrobia</taxon>
        <taxon>Methanosarcinales</taxon>
        <taxon>Methanosarcinaceae</taxon>
        <taxon>Methanosarcina</taxon>
    </lineage>
</organism>
<reference key="1">
    <citation type="journal article" date="2002" name="J. Mol. Microbiol. Biotechnol.">
        <title>The genome of Methanosarcina mazei: evidence for lateral gene transfer between Bacteria and Archaea.</title>
        <authorList>
            <person name="Deppenmeier U."/>
            <person name="Johann A."/>
            <person name="Hartsch T."/>
            <person name="Merkl R."/>
            <person name="Schmitz R.A."/>
            <person name="Martinez-Arias R."/>
            <person name="Henne A."/>
            <person name="Wiezer A."/>
            <person name="Baeumer S."/>
            <person name="Jacobi C."/>
            <person name="Brueggemann H."/>
            <person name="Lienard T."/>
            <person name="Christmann A."/>
            <person name="Boemecke M."/>
            <person name="Steckel S."/>
            <person name="Bhattacharyya A."/>
            <person name="Lykidis A."/>
            <person name="Overbeek R."/>
            <person name="Klenk H.-P."/>
            <person name="Gunsalus R.P."/>
            <person name="Fritz H.-J."/>
            <person name="Gottschalk G."/>
        </authorList>
    </citation>
    <scope>NUCLEOTIDE SEQUENCE [LARGE SCALE GENOMIC DNA]</scope>
    <source>
        <strain>ATCC BAA-159 / DSM 3647 / Goe1 / Go1 / JCM 11833 / OCM 88</strain>
    </source>
</reference>
<name>MOAC_METMA</name>
<proteinExistence type="inferred from homology"/>
<protein>
    <recommendedName>
        <fullName evidence="1">Probable cyclic pyranopterin monophosphate synthase</fullName>
        <ecNumber evidence="1">4.6.1.17</ecNumber>
    </recommendedName>
    <alternativeName>
        <fullName evidence="1">Molybdenum cofactor biosynthesis protein C</fullName>
    </alternativeName>
</protein>
<feature type="chain" id="PRO_0000097856" description="Probable cyclic pyranopterin monophosphate synthase">
    <location>
        <begin position="1"/>
        <end position="157"/>
    </location>
</feature>
<feature type="active site" evidence="1">
    <location>
        <position position="126"/>
    </location>
</feature>
<feature type="binding site" evidence="1">
    <location>
        <begin position="75"/>
        <end position="77"/>
    </location>
    <ligand>
        <name>substrate</name>
    </ligand>
</feature>
<feature type="binding site" evidence="1">
    <location>
        <begin position="111"/>
        <end position="112"/>
    </location>
    <ligand>
        <name>substrate</name>
    </ligand>
</feature>
<sequence>MEKSFTHIEAGRARMVDISEKNDVSRLARAAGEIVLSAETLEKIRTGTVEKGNVFATARVAAVLAVKKTPETIPMCHQIPITGIDVDFEIGEEAVSAVVEVRTVGKTGVEMEALTGVSSALLTVWDMVKSAEKDEIGNYPHTLIRNIRVLEKLKGKA</sequence>
<comment type="function">
    <text evidence="1">Catalyzes the conversion of (8S)-3',8-cyclo-7,8-dihydroguanosine 5'-triphosphate to cyclic pyranopterin monophosphate (cPMP).</text>
</comment>
<comment type="catalytic activity">
    <reaction evidence="1">
        <text>(8S)-3',8-cyclo-7,8-dihydroguanosine 5'-triphosphate = cyclic pyranopterin phosphate + diphosphate</text>
        <dbReference type="Rhea" id="RHEA:49580"/>
        <dbReference type="ChEBI" id="CHEBI:33019"/>
        <dbReference type="ChEBI" id="CHEBI:59648"/>
        <dbReference type="ChEBI" id="CHEBI:131766"/>
        <dbReference type="EC" id="4.6.1.17"/>
    </reaction>
</comment>
<comment type="pathway">
    <text evidence="1">Cofactor biosynthesis; molybdopterin biosynthesis.</text>
</comment>
<comment type="subunit">
    <text evidence="1">Homohexamer; trimer of dimers.</text>
</comment>
<comment type="similarity">
    <text evidence="1">Belongs to the MoaC family.</text>
</comment>